<protein>
    <recommendedName>
        <fullName>Toxin TdNa1</fullName>
    </recommendedName>
    <alternativeName>
        <fullName>PT-Arthr*-beta* NaTx2.2</fullName>
    </alternativeName>
</protein>
<accession>C9X4J9</accession>
<proteinExistence type="evidence at protein level"/>
<sequence>MKGIILFISCLMLIDVVVESRDAYPADWRGCKFSCFWGSSSWCNEECTSLGGSSGYCAWPACWCYGLPDSVRYYNNKCHK</sequence>
<dbReference type="EMBL" id="FN392277">
    <property type="protein sequence ID" value="CAY61927.1"/>
    <property type="molecule type" value="mRNA"/>
</dbReference>
<dbReference type="SMR" id="C9X4J9"/>
<dbReference type="GO" id="GO:0005576">
    <property type="term" value="C:extracellular region"/>
    <property type="evidence" value="ECO:0007669"/>
    <property type="project" value="UniProtKB-SubCell"/>
</dbReference>
<dbReference type="GO" id="GO:0019871">
    <property type="term" value="F:sodium channel inhibitor activity"/>
    <property type="evidence" value="ECO:0007669"/>
    <property type="project" value="InterPro"/>
</dbReference>
<dbReference type="GO" id="GO:0090729">
    <property type="term" value="F:toxin activity"/>
    <property type="evidence" value="ECO:0007669"/>
    <property type="project" value="UniProtKB-KW"/>
</dbReference>
<dbReference type="GO" id="GO:0006952">
    <property type="term" value="P:defense response"/>
    <property type="evidence" value="ECO:0007669"/>
    <property type="project" value="InterPro"/>
</dbReference>
<dbReference type="CDD" id="cd23106">
    <property type="entry name" value="neurotoxins_LC_scorpion"/>
    <property type="match status" value="1"/>
</dbReference>
<dbReference type="FunFam" id="3.30.30.10:FF:000002">
    <property type="entry name" value="Alpha-like toxin BmK-M1"/>
    <property type="match status" value="1"/>
</dbReference>
<dbReference type="Gene3D" id="3.30.30.10">
    <property type="entry name" value="Knottin, scorpion toxin-like"/>
    <property type="match status" value="1"/>
</dbReference>
<dbReference type="InterPro" id="IPR044062">
    <property type="entry name" value="LCN-type_CS_alpha_beta_dom"/>
</dbReference>
<dbReference type="InterPro" id="IPR003614">
    <property type="entry name" value="Scorpion_toxin-like"/>
</dbReference>
<dbReference type="InterPro" id="IPR036574">
    <property type="entry name" value="Scorpion_toxin-like_sf"/>
</dbReference>
<dbReference type="InterPro" id="IPR018218">
    <property type="entry name" value="Scorpion_toxinL"/>
</dbReference>
<dbReference type="InterPro" id="IPR002061">
    <property type="entry name" value="Scorpion_toxinL/defensin"/>
</dbReference>
<dbReference type="Pfam" id="PF00537">
    <property type="entry name" value="Toxin_3"/>
    <property type="match status" value="1"/>
</dbReference>
<dbReference type="PRINTS" id="PR00285">
    <property type="entry name" value="SCORPNTOXIN"/>
</dbReference>
<dbReference type="SMART" id="SM00505">
    <property type="entry name" value="Knot1"/>
    <property type="match status" value="1"/>
</dbReference>
<dbReference type="SUPFAM" id="SSF57095">
    <property type="entry name" value="Scorpion toxin-like"/>
    <property type="match status" value="1"/>
</dbReference>
<dbReference type="PROSITE" id="PS51863">
    <property type="entry name" value="LCN_CSAB"/>
    <property type="match status" value="1"/>
</dbReference>
<organism>
    <name type="scientific">Tityus discrepans</name>
    <name type="common">Venezuelan scorpion</name>
    <dbReference type="NCBI Taxonomy" id="57059"/>
    <lineage>
        <taxon>Eukaryota</taxon>
        <taxon>Metazoa</taxon>
        <taxon>Ecdysozoa</taxon>
        <taxon>Arthropoda</taxon>
        <taxon>Chelicerata</taxon>
        <taxon>Arachnida</taxon>
        <taxon>Scorpiones</taxon>
        <taxon>Buthida</taxon>
        <taxon>Buthoidea</taxon>
        <taxon>Buthidae</taxon>
        <taxon>Tityus</taxon>
    </lineage>
</organism>
<reference key="1">
    <citation type="journal article" date="2009" name="Biochimie">
        <title>Molecular cloning and nucleotide sequence analysis of genes from a cDNA library of the scorpion Tityus discrepans.</title>
        <authorList>
            <person name="D'Suze G."/>
            <person name="Schwartz E.F."/>
            <person name="Garcia-Gomez B.I."/>
            <person name="Sevcik C."/>
            <person name="Possani L.D."/>
        </authorList>
    </citation>
    <scope>NUCLEOTIDE SEQUENCE [MRNA]</scope>
    <scope>PROTEIN SEQUENCE OF 21-46</scope>
    <source>
        <tissue>Venom</tissue>
        <tissue>Venom gland</tissue>
    </source>
</reference>
<reference key="2">
    <citation type="journal article" date="2012" name="PLoS ONE">
        <title>Identification and phylogenetic analysis of Tityus pachyurus and Tityus obscurus novel putative Na+-channel scorpion toxins.</title>
        <authorList>
            <person name="Guerrero-Vargas J.A."/>
            <person name="Mourao C.B."/>
            <person name="Quintero-Hernandez V."/>
            <person name="Possani L.D."/>
            <person name="Schwartz E.F."/>
        </authorList>
    </citation>
    <scope>NOMENCLATURE</scope>
</reference>
<comment type="function">
    <text evidence="1">Inhibits the sodium (Nav) currents in an apparent irreversible manner. Produces small depolarization and induces repetitive firing in squid axons. Is specific for arthropods (crickets, triatomides, crabs and squids), but is non-toxic to mice (By similarity).</text>
</comment>
<comment type="subcellular location">
    <subcellularLocation>
        <location>Secreted</location>
    </subcellularLocation>
</comment>
<comment type="tissue specificity">
    <text>Expressed by the venom gland.</text>
</comment>
<comment type="domain">
    <text evidence="4">Has the structural arrangement of an alpha-helix connected to antiparallel beta-sheets by disulfide bonds (CS-alpha/beta).</text>
</comment>
<comment type="similarity">
    <text evidence="4">Belongs to the long (4 C-C) scorpion toxin superfamily. Sodium channel inhibitor family. Beta subfamily.</text>
</comment>
<name>SCNA1_TITDI</name>
<keyword id="KW-0903">Direct protein sequencing</keyword>
<keyword id="KW-1015">Disulfide bond</keyword>
<keyword id="KW-0872">Ion channel impairing toxin</keyword>
<keyword id="KW-0528">Neurotoxin</keyword>
<keyword id="KW-0964">Secreted</keyword>
<keyword id="KW-0732">Signal</keyword>
<keyword id="KW-0800">Toxin</keyword>
<keyword id="KW-0738">Voltage-gated sodium channel impairing toxin</keyword>
<feature type="signal peptide" evidence="3">
    <location>
        <begin position="1"/>
        <end position="20"/>
    </location>
</feature>
<feature type="chain" id="PRO_5000525366" description="Toxin TdNa1">
    <location>
        <begin position="21"/>
        <end position="80"/>
    </location>
</feature>
<feature type="domain" description="LCN-type CS-alpha/beta" evidence="2">
    <location>
        <begin position="21"/>
        <end position="79"/>
    </location>
</feature>
<feature type="disulfide bond" evidence="2">
    <location>
        <begin position="31"/>
        <end position="78"/>
    </location>
</feature>
<feature type="disulfide bond" evidence="2">
    <location>
        <begin position="35"/>
        <end position="57"/>
    </location>
</feature>
<feature type="disulfide bond" evidence="2">
    <location>
        <begin position="43"/>
        <end position="62"/>
    </location>
</feature>
<feature type="disulfide bond" evidence="2">
    <location>
        <begin position="47"/>
        <end position="64"/>
    </location>
</feature>
<evidence type="ECO:0000250" key="1"/>
<evidence type="ECO:0000255" key="2">
    <source>
        <dbReference type="PROSITE-ProRule" id="PRU01210"/>
    </source>
</evidence>
<evidence type="ECO:0000269" key="3">
    <source>
    </source>
</evidence>
<evidence type="ECO:0000305" key="4"/>